<comment type="similarity">
    <text evidence="1">Belongs to the DNA glycosylase MPG family.</text>
</comment>
<proteinExistence type="inferred from homology"/>
<gene>
    <name type="ordered locus">lwe0906</name>
</gene>
<sequence length="207" mass="23528">MNSIIKEHYFEHKSTIELARDILGMRLVHQTQHVKLSGYIVETEAYLGATDIAAHSYRNLKTKRTDIMYQPAGAIYMYQMHRQVLLNFITMKEGVPEAVLIRAIEPDEASIPYMEIKRNGKTGSELTNGPGKLTQALGLTIKDYGKTLFNSNIWLEEAKIPHIIEATNRIGVPNKGIATHYPLRFTVKGSRYISGQRKGQILTEIWQ</sequence>
<organism>
    <name type="scientific">Listeria welshimeri serovar 6b (strain ATCC 35897 / DSM 20650 / CCUG 15529 / CIP 8149 / NCTC 11857 / SLCC 5334 / V8)</name>
    <dbReference type="NCBI Taxonomy" id="386043"/>
    <lineage>
        <taxon>Bacteria</taxon>
        <taxon>Bacillati</taxon>
        <taxon>Bacillota</taxon>
        <taxon>Bacilli</taxon>
        <taxon>Bacillales</taxon>
        <taxon>Listeriaceae</taxon>
        <taxon>Listeria</taxon>
    </lineage>
</organism>
<dbReference type="EC" id="3.2.2.-" evidence="1"/>
<dbReference type="EMBL" id="AM263198">
    <property type="protein sequence ID" value="CAK20324.1"/>
    <property type="molecule type" value="Genomic_DNA"/>
</dbReference>
<dbReference type="RefSeq" id="WP_011701737.1">
    <property type="nucleotide sequence ID" value="NC_008555.1"/>
</dbReference>
<dbReference type="SMR" id="A0AH42"/>
<dbReference type="STRING" id="386043.lwe0906"/>
<dbReference type="GeneID" id="61188796"/>
<dbReference type="KEGG" id="lwe:lwe0906"/>
<dbReference type="eggNOG" id="COG2094">
    <property type="taxonomic scope" value="Bacteria"/>
</dbReference>
<dbReference type="HOGENOM" id="CLU_060471_2_0_9"/>
<dbReference type="OrthoDB" id="9794313at2"/>
<dbReference type="Proteomes" id="UP000000779">
    <property type="component" value="Chromosome"/>
</dbReference>
<dbReference type="GO" id="GO:0003905">
    <property type="term" value="F:alkylbase DNA N-glycosylase activity"/>
    <property type="evidence" value="ECO:0007669"/>
    <property type="project" value="InterPro"/>
</dbReference>
<dbReference type="GO" id="GO:0003677">
    <property type="term" value="F:DNA binding"/>
    <property type="evidence" value="ECO:0007669"/>
    <property type="project" value="InterPro"/>
</dbReference>
<dbReference type="GO" id="GO:0006284">
    <property type="term" value="P:base-excision repair"/>
    <property type="evidence" value="ECO:0007669"/>
    <property type="project" value="InterPro"/>
</dbReference>
<dbReference type="CDD" id="cd00540">
    <property type="entry name" value="AAG"/>
    <property type="match status" value="1"/>
</dbReference>
<dbReference type="FunFam" id="3.10.300.10:FF:000001">
    <property type="entry name" value="Putative 3-methyladenine DNA glycosylase"/>
    <property type="match status" value="1"/>
</dbReference>
<dbReference type="Gene3D" id="3.10.300.10">
    <property type="entry name" value="Methylpurine-DNA glycosylase (MPG)"/>
    <property type="match status" value="1"/>
</dbReference>
<dbReference type="HAMAP" id="MF_00527">
    <property type="entry name" value="3MGH"/>
    <property type="match status" value="1"/>
</dbReference>
<dbReference type="InterPro" id="IPR011034">
    <property type="entry name" value="Formyl_transferase-like_C_sf"/>
</dbReference>
<dbReference type="InterPro" id="IPR003180">
    <property type="entry name" value="MPG"/>
</dbReference>
<dbReference type="InterPro" id="IPR036995">
    <property type="entry name" value="MPG_sf"/>
</dbReference>
<dbReference type="NCBIfam" id="TIGR00567">
    <property type="entry name" value="3mg"/>
    <property type="match status" value="1"/>
</dbReference>
<dbReference type="NCBIfam" id="NF002002">
    <property type="entry name" value="PRK00802.1-2"/>
    <property type="match status" value="1"/>
</dbReference>
<dbReference type="PANTHER" id="PTHR10429">
    <property type="entry name" value="DNA-3-METHYLADENINE GLYCOSYLASE"/>
    <property type="match status" value="1"/>
</dbReference>
<dbReference type="PANTHER" id="PTHR10429:SF0">
    <property type="entry name" value="DNA-3-METHYLADENINE GLYCOSYLASE"/>
    <property type="match status" value="1"/>
</dbReference>
<dbReference type="Pfam" id="PF02245">
    <property type="entry name" value="Pur_DNA_glyco"/>
    <property type="match status" value="1"/>
</dbReference>
<dbReference type="SUPFAM" id="SSF50486">
    <property type="entry name" value="FMT C-terminal domain-like"/>
    <property type="match status" value="1"/>
</dbReference>
<keyword id="KW-0227">DNA damage</keyword>
<keyword id="KW-0234">DNA repair</keyword>
<keyword id="KW-0378">Hydrolase</keyword>
<name>3MGH_LISW6</name>
<feature type="chain" id="PRO_1000050992" description="Putative 3-methyladenine DNA glycosylase">
    <location>
        <begin position="1"/>
        <end position="207"/>
    </location>
</feature>
<reference key="1">
    <citation type="journal article" date="2006" name="J. Bacteriol.">
        <title>Whole-genome sequence of Listeria welshimeri reveals common steps in genome reduction with Listeria innocua as compared to Listeria monocytogenes.</title>
        <authorList>
            <person name="Hain T."/>
            <person name="Steinweg C."/>
            <person name="Kuenne C.T."/>
            <person name="Billion A."/>
            <person name="Ghai R."/>
            <person name="Chatterjee S.S."/>
            <person name="Domann E."/>
            <person name="Kaerst U."/>
            <person name="Goesmann A."/>
            <person name="Bekel T."/>
            <person name="Bartels D."/>
            <person name="Kaiser O."/>
            <person name="Meyer F."/>
            <person name="Puehler A."/>
            <person name="Weisshaar B."/>
            <person name="Wehland J."/>
            <person name="Liang C."/>
            <person name="Dandekar T."/>
            <person name="Lampidis R."/>
            <person name="Kreft J."/>
            <person name="Goebel W."/>
            <person name="Chakraborty T."/>
        </authorList>
    </citation>
    <scope>NUCLEOTIDE SEQUENCE [LARGE SCALE GENOMIC DNA]</scope>
    <source>
        <strain>ATCC 35897 / DSM 20650 / CCUG 15529 / CIP 8149 / NCTC 11857 / SLCC 5334 / V8</strain>
    </source>
</reference>
<evidence type="ECO:0000255" key="1">
    <source>
        <dbReference type="HAMAP-Rule" id="MF_00527"/>
    </source>
</evidence>
<accession>A0AH42</accession>
<protein>
    <recommendedName>
        <fullName evidence="1">Putative 3-methyladenine DNA glycosylase</fullName>
        <ecNumber evidence="1">3.2.2.-</ecNumber>
    </recommendedName>
</protein>